<name>OXDA_MOUSE</name>
<comment type="function">
    <text evidence="1 3 5 6 7 9 12 17 18 19 21 22 23 26 32 35 39 40 42 44 45">Catalyzes the oxidative deamination of D-amino acids with broad substrate specificity (PubMed:11419736, PubMed:1346751, PubMed:1355365, PubMed:16141519, PubMed:17042912, PubMed:20567862, PubMed:20603179, PubMed:24194108, PubMed:33484270, PubMed:8100053, Ref.36). Required to catabolize D-amino acids synthesized endogenously, of gastrointestinal bacterial origin or obtained from the diet, and to use these as nutrients (PubMed:24194108, PubMed:27670111, PubMed:6147398, PubMed:7901999, Ref.33, Ref.36). Regulates the level of D-amino acid neurotransmitters in the brain, such as D-serine, a co-agonist of N-methyl D-aspartate (NMDA) receptors, and may modulate synaptic transmission (PubMed:11419736, PubMed:29532193, PubMed:8100053). Catalyzes the first step of the racemization of D-DOPA to L-DOPA, for possible use in an alternative dopamine biosynthesis pathway (PubMed:17042912). Also catalyzes the first step of the chiral inversion of N(gamma)-nitro-D-arginine methyl ester (D-NNA) to its L-enantiomer L-NNA that acts as a nitric oxide synthase inhibitor (PubMed:20564560). The hydrogen peroxide produced in the reaction provides protection against microbial infection; it contributes to the oxidative killing activity of phagocytic leukocytes and protects against bacterial colonization of the small intestine (PubMed:22271930, PubMed:25425233, PubMed:27670111). Enzyme secreted into the lumen of the intestine may not be catalytically active and could instead be proteolytically cleaved into peptides with antimicrobial activity (PubMed:33484270). The hydrogen peroxide produced in the reaction may also play a role in promoting cellular senescence in response to DNA damage (By similarity). Could act as a detoxifying agent which removes D-amino acids accumulated during aging (By similarity).</text>
</comment>
<comment type="catalytic activity">
    <reaction evidence="7 18 19 35">
        <text>a D-alpha-amino acid + O2 + H2O = a 2-oxocarboxylate + H2O2 + NH4(+)</text>
        <dbReference type="Rhea" id="RHEA:21816"/>
        <dbReference type="ChEBI" id="CHEBI:15377"/>
        <dbReference type="ChEBI" id="CHEBI:15379"/>
        <dbReference type="ChEBI" id="CHEBI:16240"/>
        <dbReference type="ChEBI" id="CHEBI:28938"/>
        <dbReference type="ChEBI" id="CHEBI:35179"/>
        <dbReference type="ChEBI" id="CHEBI:59871"/>
        <dbReference type="EC" id="1.4.3.3"/>
    </reaction>
    <physiologicalReaction direction="left-to-right" evidence="7 18 19 35">
        <dbReference type="Rhea" id="RHEA:21817"/>
    </physiologicalReaction>
</comment>
<comment type="catalytic activity">
    <reaction evidence="7 18 19 35">
        <text>D-alanine + O2 + H2O = pyruvate + H2O2 + NH4(+)</text>
        <dbReference type="Rhea" id="RHEA:22688"/>
        <dbReference type="ChEBI" id="CHEBI:15361"/>
        <dbReference type="ChEBI" id="CHEBI:15377"/>
        <dbReference type="ChEBI" id="CHEBI:15379"/>
        <dbReference type="ChEBI" id="CHEBI:16240"/>
        <dbReference type="ChEBI" id="CHEBI:28938"/>
        <dbReference type="ChEBI" id="CHEBI:57416"/>
    </reaction>
    <physiologicalReaction direction="left-to-right" evidence="7 18 19 35">
        <dbReference type="Rhea" id="RHEA:22689"/>
    </physiologicalReaction>
</comment>
<comment type="catalytic activity">
    <reaction evidence="3">
        <text>D-cysteine + O2 + H2O = 2-oxo-3-sulfanylpropanoate + H2O2 + NH4(+)</text>
        <dbReference type="Rhea" id="RHEA:78791"/>
        <dbReference type="ChEBI" id="CHEBI:15377"/>
        <dbReference type="ChEBI" id="CHEBI:15379"/>
        <dbReference type="ChEBI" id="CHEBI:16240"/>
        <dbReference type="ChEBI" id="CHEBI:28938"/>
        <dbReference type="ChEBI" id="CHEBI:35236"/>
        <dbReference type="ChEBI" id="CHEBI:57678"/>
    </reaction>
    <physiologicalReaction direction="left-to-right" evidence="3">
        <dbReference type="Rhea" id="RHEA:78792"/>
    </physiologicalReaction>
</comment>
<comment type="catalytic activity">
    <reaction evidence="3">
        <text>D-dopa + O2 + H2O = 3-(3,4-dihydroxyphenyl)pyruvate + H2O2 + NH4(+)</text>
        <dbReference type="Rhea" id="RHEA:70971"/>
        <dbReference type="ChEBI" id="CHEBI:15377"/>
        <dbReference type="ChEBI" id="CHEBI:15379"/>
        <dbReference type="ChEBI" id="CHEBI:16240"/>
        <dbReference type="ChEBI" id="CHEBI:28938"/>
        <dbReference type="ChEBI" id="CHEBI:29055"/>
        <dbReference type="ChEBI" id="CHEBI:149689"/>
    </reaction>
    <physiologicalReaction direction="left-to-right" evidence="3">
        <dbReference type="Rhea" id="RHEA:70972"/>
    </physiologicalReaction>
</comment>
<comment type="catalytic activity">
    <reaction evidence="18">
        <text>D-leucine + O2 + H2O = 4-methyl-2-oxopentanoate + H2O2 + NH4(+)</text>
        <dbReference type="Rhea" id="RHEA:78211"/>
        <dbReference type="ChEBI" id="CHEBI:15377"/>
        <dbReference type="ChEBI" id="CHEBI:15379"/>
        <dbReference type="ChEBI" id="CHEBI:16240"/>
        <dbReference type="ChEBI" id="CHEBI:17865"/>
        <dbReference type="ChEBI" id="CHEBI:28938"/>
        <dbReference type="ChEBI" id="CHEBI:143079"/>
    </reaction>
    <physiologicalReaction direction="left-to-right" evidence="18">
        <dbReference type="Rhea" id="RHEA:78212"/>
    </physiologicalReaction>
</comment>
<comment type="catalytic activity">
    <reaction evidence="2">
        <text>D-lysine + O2 + H2O = 6-amino-2-oxohexanoate + H2O2 + NH4(+)</text>
        <dbReference type="Rhea" id="RHEA:37583"/>
        <dbReference type="ChEBI" id="CHEBI:15377"/>
        <dbReference type="ChEBI" id="CHEBI:15379"/>
        <dbReference type="ChEBI" id="CHEBI:16240"/>
        <dbReference type="ChEBI" id="CHEBI:28938"/>
        <dbReference type="ChEBI" id="CHEBI:32557"/>
        <dbReference type="ChEBI" id="CHEBI:58183"/>
        <dbReference type="EC" id="1.4.3.3"/>
    </reaction>
    <physiologicalReaction direction="left-to-right" evidence="2">
        <dbReference type="Rhea" id="RHEA:37584"/>
    </physiologicalReaction>
</comment>
<comment type="catalytic activity">
    <reaction evidence="2">
        <text>D-methionine + O2 + H2O = 4-methylsulfanyl-2-oxobutanoate + H2O2 + NH4(+)</text>
        <dbReference type="Rhea" id="RHEA:78207"/>
        <dbReference type="ChEBI" id="CHEBI:15377"/>
        <dbReference type="ChEBI" id="CHEBI:15379"/>
        <dbReference type="ChEBI" id="CHEBI:16240"/>
        <dbReference type="ChEBI" id="CHEBI:16723"/>
        <dbReference type="ChEBI" id="CHEBI:28938"/>
        <dbReference type="ChEBI" id="CHEBI:57932"/>
    </reaction>
    <physiologicalReaction direction="left-to-right" evidence="2">
        <dbReference type="Rhea" id="RHEA:78208"/>
    </physiologicalReaction>
</comment>
<comment type="catalytic activity">
    <reaction evidence="18">
        <text>D-phenylalanine + O2 + H2O = 3-phenylpyruvate + H2O2 + NH4(+)</text>
        <dbReference type="Rhea" id="RHEA:70963"/>
        <dbReference type="ChEBI" id="CHEBI:15377"/>
        <dbReference type="ChEBI" id="CHEBI:15379"/>
        <dbReference type="ChEBI" id="CHEBI:16240"/>
        <dbReference type="ChEBI" id="CHEBI:18005"/>
        <dbReference type="ChEBI" id="CHEBI:28938"/>
        <dbReference type="ChEBI" id="CHEBI:57981"/>
    </reaction>
    <physiologicalReaction direction="left-to-right" evidence="18">
        <dbReference type="Rhea" id="RHEA:70964"/>
    </physiologicalReaction>
</comment>
<comment type="catalytic activity">
    <reaction evidence="3">
        <text>D-proline + O2 = 1-pyrroline-2-carboxylate + H2O2</text>
        <dbReference type="Rhea" id="RHEA:78259"/>
        <dbReference type="ChEBI" id="CHEBI:15379"/>
        <dbReference type="ChEBI" id="CHEBI:16240"/>
        <dbReference type="ChEBI" id="CHEBI:39785"/>
        <dbReference type="ChEBI" id="CHEBI:57726"/>
    </reaction>
    <physiologicalReaction direction="left-to-right" evidence="3">
        <dbReference type="Rhea" id="RHEA:78260"/>
    </physiologicalReaction>
</comment>
<comment type="catalytic activity">
    <reaction evidence="18">
        <text>D-serine + O2 + H2O = 3-hydroxypyruvate + H2O2 + NH4(+)</text>
        <dbReference type="Rhea" id="RHEA:70951"/>
        <dbReference type="ChEBI" id="CHEBI:15377"/>
        <dbReference type="ChEBI" id="CHEBI:15379"/>
        <dbReference type="ChEBI" id="CHEBI:16240"/>
        <dbReference type="ChEBI" id="CHEBI:17180"/>
        <dbReference type="ChEBI" id="CHEBI:28938"/>
        <dbReference type="ChEBI" id="CHEBI:35247"/>
    </reaction>
    <physiologicalReaction direction="left-to-right" evidence="18">
        <dbReference type="Rhea" id="RHEA:70952"/>
    </physiologicalReaction>
</comment>
<comment type="catalytic activity">
    <reaction evidence="18">
        <text>D-tryptophan + O2 + H2O = indole-3-pyruvate + H2O2 + NH4(+)</text>
        <dbReference type="Rhea" id="RHEA:78247"/>
        <dbReference type="ChEBI" id="CHEBI:15377"/>
        <dbReference type="ChEBI" id="CHEBI:15379"/>
        <dbReference type="ChEBI" id="CHEBI:16240"/>
        <dbReference type="ChEBI" id="CHEBI:17640"/>
        <dbReference type="ChEBI" id="CHEBI:28938"/>
        <dbReference type="ChEBI" id="CHEBI:57719"/>
    </reaction>
    <physiologicalReaction direction="left-to-right" evidence="18">
        <dbReference type="Rhea" id="RHEA:78248"/>
    </physiologicalReaction>
</comment>
<comment type="catalytic activity">
    <reaction evidence="18">
        <text>D-valine + O2 + H2O = 3-methyl-2-oxobutanoate + H2O2 + NH4(+)</text>
        <dbReference type="Rhea" id="RHEA:78203"/>
        <dbReference type="ChEBI" id="CHEBI:11851"/>
        <dbReference type="ChEBI" id="CHEBI:15377"/>
        <dbReference type="ChEBI" id="CHEBI:15379"/>
        <dbReference type="ChEBI" id="CHEBI:16240"/>
        <dbReference type="ChEBI" id="CHEBI:28938"/>
        <dbReference type="ChEBI" id="CHEBI:74338"/>
    </reaction>
    <physiologicalReaction direction="left-to-right" evidence="18">
        <dbReference type="Rhea" id="RHEA:78204"/>
    </physiologicalReaction>
</comment>
<comment type="cofactor">
    <cofactor evidence="19">
        <name>FAD</name>
        <dbReference type="ChEBI" id="CHEBI:57692"/>
    </cofactor>
</comment>
<comment type="activity regulation">
    <text evidence="18 19 35 38">Inhibited by benzoate and thiolactomycin (PubMed:20567862, PubMed:20603179). Inhibited by 6-chloro-1,2-benzisoxazol-3(2H)-one (CBIO) and luvadaxistat (PubMed:33484270, PubMed:37289348). Meso-tartrate has no effect on activity (PubMed:20567862).</text>
</comment>
<comment type="biophysicochemical properties">
    <kinetics>
        <KM evidence="18">24.2 mM for D-phenylalanine (at 37 degrees Celsius and at pH 8.3)</KM>
        <KM evidence="18">45.8 mM for D-histidine (at 37 degrees Celsius and at pH 8.3)</KM>
        <text evidence="18">kcat is 5.42 sec(-1) with D-phenylalanine as substrate (at 37 degrees Celsius and at pH 8.3) (PubMed:20567862). kcat is 0.46 sec(-1) with D-histidine as substrate (at 37 degrees Celsius and at pH 8.3) (PubMed:20567862).</text>
    </kinetics>
</comment>
<comment type="subunit">
    <text evidence="1">Interacts with BSN (via coiled region); the interaction is direct and inhibits DAO enzyme activity.</text>
</comment>
<comment type="subcellular location">
    <subcellularLocation>
        <location evidence="11">Peroxisome matrix</location>
    </subcellularLocation>
    <subcellularLocation>
        <location evidence="3">Cytoplasm</location>
        <location evidence="3">Cytosol</location>
    </subcellularLocation>
    <subcellularLocation>
        <location evidence="1">Presynaptic active zone</location>
    </subcellularLocation>
    <subcellularLocation>
        <location evidence="26 35">Secreted</location>
    </subcellularLocation>
    <text evidence="1 3 26 35">Transiently present in the cytosol before being delivered to the peroxisomes (By similarity). In the cerebellum, a fraction of protein localizes to the presynaptic active zone, where its activity is regulated by protein BSN (By similarity). Secreted into the lumen of the small intestine (PubMed:27670111, PubMed:33484270).</text>
</comment>
<comment type="tissue specificity">
    <text evidence="10 17 20 23 26 27 30 31 33 34 35 36 37 43">Expressed in the kidney, cerebellum, pons, medulla oblongata and the cervical, thoracic and lumbar regions of the spinal cord (at protein level) (PubMed:20564560, PubMed:22203986, PubMed:25425233, PubMed:27670111, PubMed:29194436, PubMed:30938755, PubMed:9133654). Expressed in goblet cells, enterocytes, mucosal contents and villous epithelium of the small intestine (at protein level) (PubMed:27670111, PubMed:33484270). In the epididymis, expression is higher in the caput region than in the corpus and cauda regions (at protein level) (PubMed:30938755). In the thoracic and lumbar regions of the spinal cord, expression decreases in male mice with age (at protein level) (PubMed:30938755). Expressed in neutrophils of the spleen following infection by S.typhimurium (at protein level) (PubMed:25425233). Expression in the liver, heart and lung is disputed (at protein level) (PubMed:16843004, PubMed:20564560, PubMed:2895696, PubMed:2906843, PubMed:29194436, PubMed:9133654). In a model of ischemic stroke, expression is increased in cortical and hippocampal astrocytes following ischemia-reperfusion; an increase in expression and activity may lead to hydrogen peroxide-induced cytotoxicity (at protein level) (PubMed:31309542, PubMed:36429117). Expressed in the cerebellum and small intestine (PubMed:35915065, PubMed:9133654). Not expressed in the lung, cecum or cortex (at protein level) (PubMed:22203986, PubMed:25425233, PubMed:2906843, PubMed:9133654).</text>
</comment>
<comment type="developmental stage">
    <text evidence="41">In the liver and kidney, progressively increases during postnatal stages (at protein level).</text>
</comment>
<comment type="induction">
    <text evidence="26">Repressed in the small intestine during treatment of whole animal with the antibiotic vancomycin.</text>
</comment>
<comment type="PTM">
    <text evidence="3">Phosphorylated in the cerebellum; probably not by PRKACA, PRKCA or PRKCE.</text>
</comment>
<comment type="PTM">
    <text evidence="3">May be S-nitrosylated, which partially inactivates the enzyme.</text>
</comment>
<comment type="disruption phenotype">
    <text evidence="24 25 32 34">Knockout mice exhibit heightened anxiety and enhanced short-term memory performance (PubMed:25816902, PubMed:26833794). Increases the level of D-leucine, D-alanine, D-serine, D-arginine, and D-isoleucine in the brain (PubMed:29532193). Increases the level of L-tryptophan in the brain; the level of other L-amino acids are unchanged (PubMed:29532193). In a model of ischemic stroke, RNAi-mediated knockdown of the enzyme by intracerebroventricular injection decreases the ischaemia-induced infarct size (PubMed:31309542). Does not disrupt sleep or circadian rhythm (PubMed:25816902). Long-term spatial memory is unaffected (PubMed:26833794).</text>
</comment>
<comment type="miscellaneous">
    <text evidence="31">Transgenic mice overexpressing the amyotrophic lateral sclerosis-associated human DAO variant 'Trp-199' exhibit lower body-weight, progressive kephosis, and a significant loss of motor neurons in the lumbar spinal cord is evident at 8 months; the effect is greater in females. The DAO 'Trp-199' transgene also potentiates the development of disease in the transgenic mouse model of ALS overexpressing the human SOD1 variant 'Ala-94'.</text>
</comment>
<comment type="similarity">
    <text evidence="46">Belongs to the DAMOX/DASOX family.</text>
</comment>
<comment type="caution">
    <text evidence="35">Anti-DAO antibodies may recognize additional unspecific signals.</text>
</comment>
<reference evidence="47" key="1">
    <citation type="journal article" date="1990" name="Gene">
        <title>Cloning and expression of a cDNA encoding mouse kidney D-amino acid oxidase.</title>
        <authorList>
            <person name="Tada M."/>
            <person name="Fukui K."/>
            <person name="Momoi K."/>
            <person name="Miyake Y."/>
        </authorList>
    </citation>
    <scope>NUCLEOTIDE SEQUENCE [MRNA]</scope>
    <source>
        <tissue>Kidney</tissue>
    </source>
</reference>
<reference evidence="48 49" key="2">
    <citation type="journal article" date="1992" name="Biochim. Biophys. Acta">
        <title>A single-base-pair substitution abolishes D-amino-acid oxidase activity in the mouse.</title>
        <authorList>
            <person name="Sasaki M."/>
            <person name="Konno R."/>
            <person name="Nishio M."/>
            <person name="Niwa A."/>
            <person name="Yasumura Y."/>
            <person name="Enami J."/>
        </authorList>
    </citation>
    <scope>NUCLEOTIDE SEQUENCE [MRNA]</scope>
    <scope>CHARACTERIZATION OF VARIANT ARG-181</scope>
    <scope>FUNCTION</scope>
    <scope>CATALYTIC ACTIVITY</scope>
    <source>
        <tissue>Kidney</tissue>
    </source>
</reference>
<reference evidence="50" key="3">
    <citation type="journal article" date="2005" name="Science">
        <title>The transcriptional landscape of the mammalian genome.</title>
        <authorList>
            <person name="Carninci P."/>
            <person name="Kasukawa T."/>
            <person name="Katayama S."/>
            <person name="Gough J."/>
            <person name="Frith M.C."/>
            <person name="Maeda N."/>
            <person name="Oyama R."/>
            <person name="Ravasi T."/>
            <person name="Lenhard B."/>
            <person name="Wells C."/>
            <person name="Kodzius R."/>
            <person name="Shimokawa K."/>
            <person name="Bajic V.B."/>
            <person name="Brenner S.E."/>
            <person name="Batalov S."/>
            <person name="Forrest A.R."/>
            <person name="Zavolan M."/>
            <person name="Davis M.J."/>
            <person name="Wilming L.G."/>
            <person name="Aidinis V."/>
            <person name="Allen J.E."/>
            <person name="Ambesi-Impiombato A."/>
            <person name="Apweiler R."/>
            <person name="Aturaliya R.N."/>
            <person name="Bailey T.L."/>
            <person name="Bansal M."/>
            <person name="Baxter L."/>
            <person name="Beisel K.W."/>
            <person name="Bersano T."/>
            <person name="Bono H."/>
            <person name="Chalk A.M."/>
            <person name="Chiu K.P."/>
            <person name="Choudhary V."/>
            <person name="Christoffels A."/>
            <person name="Clutterbuck D.R."/>
            <person name="Crowe M.L."/>
            <person name="Dalla E."/>
            <person name="Dalrymple B.P."/>
            <person name="de Bono B."/>
            <person name="Della Gatta G."/>
            <person name="di Bernardo D."/>
            <person name="Down T."/>
            <person name="Engstrom P."/>
            <person name="Fagiolini M."/>
            <person name="Faulkner G."/>
            <person name="Fletcher C.F."/>
            <person name="Fukushima T."/>
            <person name="Furuno M."/>
            <person name="Futaki S."/>
            <person name="Gariboldi M."/>
            <person name="Georgii-Hemming P."/>
            <person name="Gingeras T.R."/>
            <person name="Gojobori T."/>
            <person name="Green R.E."/>
            <person name="Gustincich S."/>
            <person name="Harbers M."/>
            <person name="Hayashi Y."/>
            <person name="Hensch T.K."/>
            <person name="Hirokawa N."/>
            <person name="Hill D."/>
            <person name="Huminiecki L."/>
            <person name="Iacono M."/>
            <person name="Ikeo K."/>
            <person name="Iwama A."/>
            <person name="Ishikawa T."/>
            <person name="Jakt M."/>
            <person name="Kanapin A."/>
            <person name="Katoh M."/>
            <person name="Kawasawa Y."/>
            <person name="Kelso J."/>
            <person name="Kitamura H."/>
            <person name="Kitano H."/>
            <person name="Kollias G."/>
            <person name="Krishnan S.P."/>
            <person name="Kruger A."/>
            <person name="Kummerfeld S.K."/>
            <person name="Kurochkin I.V."/>
            <person name="Lareau L.F."/>
            <person name="Lazarevic D."/>
            <person name="Lipovich L."/>
            <person name="Liu J."/>
            <person name="Liuni S."/>
            <person name="McWilliam S."/>
            <person name="Madan Babu M."/>
            <person name="Madera M."/>
            <person name="Marchionni L."/>
            <person name="Matsuda H."/>
            <person name="Matsuzawa S."/>
            <person name="Miki H."/>
            <person name="Mignone F."/>
            <person name="Miyake S."/>
            <person name="Morris K."/>
            <person name="Mottagui-Tabar S."/>
            <person name="Mulder N."/>
            <person name="Nakano N."/>
            <person name="Nakauchi H."/>
            <person name="Ng P."/>
            <person name="Nilsson R."/>
            <person name="Nishiguchi S."/>
            <person name="Nishikawa S."/>
            <person name="Nori F."/>
            <person name="Ohara O."/>
            <person name="Okazaki Y."/>
            <person name="Orlando V."/>
            <person name="Pang K.C."/>
            <person name="Pavan W.J."/>
            <person name="Pavesi G."/>
            <person name="Pesole G."/>
            <person name="Petrovsky N."/>
            <person name="Piazza S."/>
            <person name="Reed J."/>
            <person name="Reid J.F."/>
            <person name="Ring B.Z."/>
            <person name="Ringwald M."/>
            <person name="Rost B."/>
            <person name="Ruan Y."/>
            <person name="Salzberg S.L."/>
            <person name="Sandelin A."/>
            <person name="Schneider C."/>
            <person name="Schoenbach C."/>
            <person name="Sekiguchi K."/>
            <person name="Semple C.A."/>
            <person name="Seno S."/>
            <person name="Sessa L."/>
            <person name="Sheng Y."/>
            <person name="Shibata Y."/>
            <person name="Shimada H."/>
            <person name="Shimada K."/>
            <person name="Silva D."/>
            <person name="Sinclair B."/>
            <person name="Sperling S."/>
            <person name="Stupka E."/>
            <person name="Sugiura K."/>
            <person name="Sultana R."/>
            <person name="Takenaka Y."/>
            <person name="Taki K."/>
            <person name="Tammoja K."/>
            <person name="Tan S.L."/>
            <person name="Tang S."/>
            <person name="Taylor M.S."/>
            <person name="Tegner J."/>
            <person name="Teichmann S.A."/>
            <person name="Ueda H.R."/>
            <person name="van Nimwegen E."/>
            <person name="Verardo R."/>
            <person name="Wei C.L."/>
            <person name="Yagi K."/>
            <person name="Yamanishi H."/>
            <person name="Zabarovsky E."/>
            <person name="Zhu S."/>
            <person name="Zimmer A."/>
            <person name="Hide W."/>
            <person name="Bult C."/>
            <person name="Grimmond S.M."/>
            <person name="Teasdale R.D."/>
            <person name="Liu E.T."/>
            <person name="Brusic V."/>
            <person name="Quackenbush J."/>
            <person name="Wahlestedt C."/>
            <person name="Mattick J.S."/>
            <person name="Hume D.A."/>
            <person name="Kai C."/>
            <person name="Sasaki D."/>
            <person name="Tomaru Y."/>
            <person name="Fukuda S."/>
            <person name="Kanamori-Katayama M."/>
            <person name="Suzuki M."/>
            <person name="Aoki J."/>
            <person name="Arakawa T."/>
            <person name="Iida J."/>
            <person name="Imamura K."/>
            <person name="Itoh M."/>
            <person name="Kato T."/>
            <person name="Kawaji H."/>
            <person name="Kawagashira N."/>
            <person name="Kawashima T."/>
            <person name="Kojima M."/>
            <person name="Kondo S."/>
            <person name="Konno H."/>
            <person name="Nakano K."/>
            <person name="Ninomiya N."/>
            <person name="Nishio T."/>
            <person name="Okada M."/>
            <person name="Plessy C."/>
            <person name="Shibata K."/>
            <person name="Shiraki T."/>
            <person name="Suzuki S."/>
            <person name="Tagami M."/>
            <person name="Waki K."/>
            <person name="Watahiki A."/>
            <person name="Okamura-Oho Y."/>
            <person name="Suzuki H."/>
            <person name="Kawai J."/>
            <person name="Hayashizaki Y."/>
        </authorList>
    </citation>
    <scope>NUCLEOTIDE SEQUENCE [LARGE SCALE MRNA]</scope>
    <source>
        <strain>C57BL/6J</strain>
        <tissue>Medulla oblongata</tissue>
    </source>
</reference>
<reference key="4">
    <citation type="journal article" date="2004" name="Genome Res.">
        <title>The status, quality, and expansion of the NIH full-length cDNA project: the Mammalian Gene Collection (MGC).</title>
        <authorList>
            <consortium name="The MGC Project Team"/>
        </authorList>
    </citation>
    <scope>NUCLEOTIDE SEQUENCE [LARGE SCALE MRNA]</scope>
    <source>
        <strain>FVB/N</strain>
        <tissue>Kidney</tissue>
    </source>
</reference>
<reference evidence="51" key="5">
    <citation type="journal article" date="2009" name="PLoS Biol.">
        <title>Lineage-specific biology revealed by a finished genome assembly of the mouse.</title>
        <authorList>
            <person name="Church D.M."/>
            <person name="Goodstadt L."/>
            <person name="Hillier L.W."/>
            <person name="Zody M.C."/>
            <person name="Goldstein S."/>
            <person name="She X."/>
            <person name="Bult C.J."/>
            <person name="Agarwala R."/>
            <person name="Cherry J.L."/>
            <person name="DiCuccio M."/>
            <person name="Hlavina W."/>
            <person name="Kapustin Y."/>
            <person name="Meric P."/>
            <person name="Maglott D."/>
            <person name="Birtle Z."/>
            <person name="Marques A.C."/>
            <person name="Graves T."/>
            <person name="Zhou S."/>
            <person name="Teague B."/>
            <person name="Potamousis K."/>
            <person name="Churas C."/>
            <person name="Place M."/>
            <person name="Herschleb J."/>
            <person name="Runnheim R."/>
            <person name="Forrest D."/>
            <person name="Amos-Landgraf J."/>
            <person name="Schwartz D.C."/>
            <person name="Cheng Z."/>
            <person name="Lindblad-Toh K."/>
            <person name="Eichler E.E."/>
            <person name="Ponting C.P."/>
        </authorList>
    </citation>
    <scope>NUCLEOTIDE SEQUENCE [LARGE SCALE GENOMIC DNA]</scope>
    <source>
        <strain evidence="51">C57BL/6J</strain>
    </source>
</reference>
<reference key="6">
    <citation type="journal article" date="1988" name="Comp. Biochem. Physiol.">
        <title>D-amino acid oxidase in mouse liver.</title>
        <authorList>
            <person name="Nagata Y."/>
            <person name="Akino T."/>
        </authorList>
    </citation>
    <scope>TISSUE SPECIFICITY</scope>
</reference>
<reference key="7">
    <citation type="journal article" date="1988" name="Comp. Biochem. Physiol.">
        <title>D-amino acid oxidase in mouse liver--II.</title>
        <authorList>
            <person name="Nagata Y."/>
            <person name="Shimojo T."/>
            <person name="Akino T."/>
        </authorList>
    </citation>
    <scope>TISSUE SPECIFICITY</scope>
</reference>
<reference key="8">
    <citation type="journal article" date="1993" name="J. Biol. Chem.">
        <title>Biological role of D-amino acid oxidase and D-aspartate oxidase. Effects of D-amino acids.</title>
        <authorList>
            <person name="D'Aniello A."/>
            <person name="D'Onofrio G."/>
            <person name="Pischetola M."/>
            <person name="D'Aniello G."/>
            <person name="Vetere A."/>
            <person name="Petrucelli L."/>
            <person name="Fisher G.H."/>
        </authorList>
    </citation>
    <scope>DEVELOPMENTAL STAGE</scope>
</reference>
<reference key="9">
    <citation type="journal article" date="1997" name="Biochim. Biophys. Acta">
        <title>D-amino-acid oxidase is not present in the mouse liver.</title>
        <authorList>
            <person name="Konno R."/>
            <person name="Sasaki M."/>
            <person name="Asakura S."/>
            <person name="Fukui K."/>
            <person name="Enami J."/>
            <person name="Niwa A."/>
        </authorList>
    </citation>
    <scope>TISSUE SPECIFICITY</scope>
</reference>
<reference key="10">
    <citation type="journal article" date="2010" name="Biochimie">
        <title>Thiolactomycin inhibits D-aspartate oxidase: a novel approach to probing the active site environment.</title>
        <authorList>
            <person name="Katane M."/>
            <person name="Saitoh Y."/>
            <person name="Hanai T."/>
            <person name="Sekine M."/>
            <person name="Furuchi T."/>
            <person name="Koyama N."/>
            <person name="Nakagome I."/>
            <person name="Tomoda H."/>
            <person name="Hirono S."/>
            <person name="Homma H."/>
        </authorList>
    </citation>
    <scope>FUNCTION</scope>
    <scope>CATALYTIC ACTIVITY</scope>
    <scope>COFACTOR</scope>
    <scope>ACTIVITY REGULATION</scope>
</reference>
<reference key="11">
    <citation type="journal article" date="2010" name="Cell">
        <title>A tissue-specific atlas of mouse protein phosphorylation and expression.</title>
        <authorList>
            <person name="Huttlin E.L."/>
            <person name="Jedrychowski M.P."/>
            <person name="Elias J.E."/>
            <person name="Goswami T."/>
            <person name="Rad R."/>
            <person name="Beausoleil S.A."/>
            <person name="Villen J."/>
            <person name="Haas W."/>
            <person name="Sowa M.E."/>
            <person name="Gygi S.P."/>
        </authorList>
    </citation>
    <scope>IDENTIFICATION BY MASS SPECTROMETRY [LARGE SCALE ANALYSIS]</scope>
    <source>
        <tissue>Brain</tissue>
        <tissue>Kidney</tissue>
    </source>
</reference>
<reference key="12">
    <citation type="journal article" date="2011" name="Amino Acids">
        <title>Role of the active site residues arginine-216 and arginine-237 in the substrate specificity of mammalian D-aspartate oxidase.</title>
        <authorList>
            <person name="Katane M."/>
            <person name="Saitoh Y."/>
            <person name="Maeda K."/>
            <person name="Hanai T."/>
            <person name="Sekine M."/>
            <person name="Furuchi T."/>
            <person name="Homma H."/>
        </authorList>
    </citation>
    <scope>FUNCTION</scope>
    <scope>CATALYTIC ACTIVITY</scope>
    <scope>ACTIVITY REGULATION</scope>
    <scope>BIOPHYSICOCHEMICAL PROPERTIES</scope>
</reference>
<reference key="13">
    <citation type="journal article" date="2014" name="MBio">
        <title>Salmonella evades D-amino acid oxidase to promote infection in neutrophils.</title>
        <authorList>
            <person name="Tuinema B.R."/>
            <person name="Reid-Yu S.A."/>
            <person name="Coombes B.K."/>
        </authorList>
    </citation>
    <scope>FUNCTION</scope>
    <scope>TISSUE SPECIFICITY</scope>
</reference>
<reference key="14">
    <citation type="journal article" date="2015" name="Eur. J. Neurosci.">
        <title>d-amino acid oxidase knockout (Dao(-/-)) mice show enhanced short-term memory performance and heightened anxiety, but no sleep or circadian rhythm disruption.</title>
        <authorList>
            <person name="Pritchett D."/>
            <person name="Hasan S."/>
            <person name="Tam S.K."/>
            <person name="Engle S.J."/>
            <person name="Brandon N.J."/>
            <person name="Sharp T."/>
            <person name="Foster R.G."/>
            <person name="Harrison P.J."/>
            <person name="Bannerman D.M."/>
            <person name="Peirson S.N."/>
        </authorList>
    </citation>
    <scope>DISRUPTION PHENOTYPE</scope>
</reference>
<reference key="15">
    <citation type="journal article" date="2016" name="Eur. J. Neurosci.">
        <title>Searching for cognitive enhancement in the Morris water maze: better and worse performance in D-amino acid oxidase knockout (Dao(-/-)) mice.</title>
        <authorList>
            <person name="Pritchett D."/>
            <person name="Taylor A.M."/>
            <person name="Barkus C."/>
            <person name="Engle S.J."/>
            <person name="Brandon N.J."/>
            <person name="Sharp T."/>
            <person name="Foster R.G."/>
            <person name="Harrison P.J."/>
            <person name="Peirson S.N."/>
            <person name="Bannerman D.M."/>
        </authorList>
    </citation>
    <scope>DISRUPTION PHENOTYPE</scope>
</reference>
<reference key="16">
    <citation type="journal article" date="2017" name="PLoS ONE">
        <title>Characterisation of the pathogenic effects of the in vivo expression of an ALS-linked mutation in D-amino acid oxidase: Phenotype and loss of spinal cord motor neurons.</title>
        <authorList>
            <person name="Kondori N.R."/>
            <person name="Paul P."/>
            <person name="Robbins J.P."/>
            <person name="Liu K."/>
            <person name="Hildyard J.C.W."/>
            <person name="Wells D.J."/>
            <person name="de Belleroche J.S."/>
        </authorList>
    </citation>
    <scope>TISSUE SPECIFICITY</scope>
    <scope>CHARACTERISTICS OF THE MOUSE MODEL OF ALS</scope>
</reference>
<reference key="17">
    <citation type="journal article" date="2018" name="Anal. Bioanal. Chem.">
        <title>Variations of L- and D-amino acid levels in the brain of wild-type and mutant mice lacking D-amino acid oxidase activity.</title>
        <authorList>
            <person name="Du S."/>
            <person name="Wang Y."/>
            <person name="Weatherly C.A."/>
            <person name="Holden K."/>
            <person name="Armstrong D.W."/>
        </authorList>
    </citation>
    <scope>FUNCTION</scope>
    <scope>DISRUPTION PHENOTYPE</scope>
</reference>
<reference key="18">
    <citation type="journal article" date="2019" name="Br. J. Pharmacol.">
        <title>Involvement of d-amino acid oxidase in cerebral ischaemia induced by transient occlusion of the middle cerebral artery in mice.</title>
        <authorList>
            <person name="Liu H."/>
            <person name="Zhao M.J."/>
            <person name="Wang Z.Y."/>
            <person name="Han Q.Q."/>
            <person name="Wu H.Y."/>
            <person name="Mao X.F."/>
            <person name="Wang Y.X."/>
        </authorList>
    </citation>
    <scope>TISSUE SPECIFICITY</scope>
    <scope>DISRUPTION PHENOTYPE</scope>
</reference>
<reference key="19">
    <citation type="journal article" date="2019" name="J. Biochem.">
        <title>Age- and gender-dependent D-amino acid oxidase activity in mouse brain and peripheral tissues: implication for aging and neurodegeneration.</title>
        <authorList>
            <person name="Kim S.H."/>
            <person name="Shishido Y."/>
            <person name="Sogabe H."/>
            <person name="Rachadech W."/>
            <person name="Yorita K."/>
            <person name="Kato Y."/>
            <person name="Fukui K."/>
        </authorList>
    </citation>
    <scope>TISSUE SPECIFICITY</scope>
</reference>
<reference key="20">
    <citation type="journal article" date="2021" name="Cell. Mol. Life Sci.">
        <title>Antimicrobial D-amino acid oxidase-derived peptides specify gut microbiota.</title>
        <authorList>
            <person name="Murtas G."/>
            <person name="Sacchi S."/>
            <person name="Tedeschi G."/>
            <person name="Maffioli E."/>
            <person name="Notomista E."/>
            <person name="Cafaro V."/>
            <person name="Abbondi M."/>
            <person name="Mothet J.P."/>
            <person name="Pollegioni L."/>
        </authorList>
    </citation>
    <scope>FUNCTION</scope>
    <scope>CATALYTIC ACTIVITY</scope>
    <scope>ACTIVITY REGULATION</scope>
    <scope>IDENTIFICATION BY MASS SPECTROMETRY</scope>
    <scope>SUBCELLULAR LOCATION</scope>
    <scope>TISSUE SPECIFICITY</scope>
</reference>
<reference key="21">
    <citation type="journal article" date="2022" name="Cells">
        <title>Involvement of DAAO Overexpression in Delayed Hippocampal Neuronal Death.</title>
        <authorList>
            <person name="Liu H."/>
            <person name="Zhang J.T."/>
            <person name="Mou C.Y."/>
            <person name="Hao Y."/>
            <person name="Cui W."/>
        </authorList>
    </citation>
    <scope>TISSUE SPECIFICITY</scope>
</reference>
<reference key="22">
    <citation type="journal article" date="2022" name="Transl. Psychiatry">
        <title>D-aspartate oxidase gene duplication induces social recognition memory deficit in mice and intellectual disabilities in humans.</title>
        <authorList>
            <person name="Lombardo B."/>
            <person name="Pagani M."/>
            <person name="De Rosa A."/>
            <person name="Nunziato M."/>
            <person name="Migliarini S."/>
            <person name="Garofalo M."/>
            <person name="Terrile M."/>
            <person name="D'Argenio V."/>
            <person name="Galbusera A."/>
            <person name="Nuzzo T."/>
            <person name="Ranieri A."/>
            <person name="Vitale A."/>
            <person name="Leggiero E."/>
            <person name="Di Maio A."/>
            <person name="Barsotti N."/>
            <person name="Borello U."/>
            <person name="Napolitano F."/>
            <person name="Mandarino A."/>
            <person name="Carotenuto M."/>
            <person name="Heresco-Levy U."/>
            <person name="Pasqualetti M."/>
            <person name="Malatesta P."/>
            <person name="Gozzi A."/>
            <person name="Errico F."/>
            <person name="Salvatore F."/>
            <person name="Pastore L."/>
            <person name="Usiello A."/>
        </authorList>
    </citation>
    <scope>TISSUE SPECIFICITY</scope>
</reference>
<reference key="23">
    <citation type="journal article" date="2023" name="Neurochem. Res.">
        <title>Luvadaxistat: A Novel Potent and Selective D-Amino Acid Oxidase Inhibitor Improves Cognitive and Social Deficits in Rodent Models for Schizophrenia.</title>
        <authorList>
            <person name="Fradley R."/>
            <person name="Goetghebeur P."/>
            <person name="Miller D."/>
            <person name="Burley R."/>
            <person name="Almond S."/>
            <person name="Gruart I."/>
            <person name="Masso A."/>
            <person name="Delgado Garcia J.M."/>
            <person name="Zhu B."/>
            <person name="Howley E."/>
            <person name="Neill J.C."/>
            <person name="Grayson B."/>
            <person name="Gaskin P."/>
            <person name="Carlton M."/>
            <person name="Gray I."/>
            <person name="Serrats J."/>
            <person name="Davies C.H."/>
        </authorList>
    </citation>
    <scope>ACTIVITY REGULATION</scope>
</reference>
<reference key="24">
    <citation type="journal article" date="2023" name="Neurochem. Res.">
        <authorList>
            <person name="Fradley R."/>
            <person name="Goetghebeur P."/>
            <person name="Miller D."/>
            <person name="Burley R."/>
            <person name="Almond S."/>
            <person name="Gruart I."/>
            <person name="Masso A."/>
            <person name="Delgado Garcia J.M."/>
            <person name="Zhu B."/>
            <person name="Howley E."/>
            <person name="Neill J.C."/>
            <person name="Grayson B."/>
            <person name="Gaskin P."/>
            <person name="Carlton M."/>
            <person name="Gray I."/>
            <person name="Serrats J."/>
            <person name="Davies C.H."/>
        </authorList>
    </citation>
    <scope>ERRATUM OF PUBMED:37289348</scope>
</reference>
<reference key="25">
    <citation type="journal article" date="1984" name="J. Nutr.">
        <title>Involvement of D-amino-acid oxidase in D-amino acid utilization in the mouse.</title>
        <authorList>
            <person name="Konno R."/>
            <person name="Yasumura Y."/>
        </authorList>
    </citation>
    <scope>CHARACTERIZATION OF VARIANT ARG-181</scope>
    <scope>FUNCTION</scope>
</reference>
<reference key="26">
    <citation type="journal article" date="1988" name="Biochim. Biophys. Acta">
        <title>Lack of D-amino-acid oxidase activity causes a specific renal aminoaciduria in the mouse.</title>
        <authorList>
            <person name="Konno R."/>
            <person name="Isobe K."/>
            <person name="Niwa A."/>
            <person name="Yasumura Y."/>
        </authorList>
    </citation>
    <scope>CHARACTERIZATION OF VARIANT ARG-181</scope>
</reference>
<reference key="27">
    <citation type="journal article" date="1988" name="Metabolism">
        <title>Excessive urinary excretion of methionine in mutant mice lacking D-amino-acid oxidase activity.</title>
        <authorList>
            <person name="Konno R."/>
            <person name="Isobe K."/>
            <person name="Niwa A."/>
            <person name="Yasumura Y."/>
        </authorList>
    </citation>
    <scope>CHARACTERIZATION OF VARIANT ARG-181</scope>
</reference>
<reference key="28">
    <citation type="journal article" date="1991" name="Amino Acids">
        <title>D-Aminoaciduria in mutant mice lacking D-amino-acid oxidase activity.</title>
        <authorList>
            <person name="Konno R."/>
            <person name="Ikeda M."/>
            <person name="Niwa A."/>
            <person name="Yasumura Y."/>
        </authorList>
    </citation>
    <scope>CHARACTERIZATION OF VARIANT ARG-181</scope>
    <scope>FUNCTION</scope>
</reference>
<reference key="29">
    <citation type="journal article" date="1991" name="Int. J. Biochem.">
        <title>Presence of D-amino-acid oxidase protein in mutant mice lacking D-amino-acid oxidase activity.</title>
        <authorList>
            <person name="Konno R."/>
            <person name="Yamamoto K."/>
            <person name="Niwa A."/>
            <person name="Yasumura Y."/>
        </authorList>
    </citation>
    <scope>CHARACTERIZATION OF VARIANT ARG-181</scope>
    <scope>SUBCELLULAR LOCATION</scope>
</reference>
<reference key="30">
    <citation type="journal article" date="1992" name="Biochim. Biophys. Acta">
        <title>The presence of free D-alanine, D-proline and D-serine in mice.</title>
        <authorList>
            <person name="Nagata Y."/>
            <person name="Yamamoto K."/>
            <person name="Shimojo T."/>
            <person name="Konno R."/>
            <person name="Yasumura Y."/>
            <person name="Akino T."/>
        </authorList>
    </citation>
    <scope>CHARACTERIZATION OF VARIANT ARG-181</scope>
    <scope>FUNCTION</scope>
</reference>
<reference key="31">
    <citation type="journal article" date="1993" name="Am. J. Physiol.">
        <title>Origin of D-alanine present in urine of mutant mice lacking D-amino-acid oxidase activity.</title>
        <authorList>
            <person name="Konno R."/>
            <person name="Oowada T."/>
            <person name="Ozaki A."/>
            <person name="Iida T."/>
            <person name="Niwa A."/>
            <person name="Yasumura Y."/>
            <person name="Mizutani T."/>
        </authorList>
    </citation>
    <scope>CHARACTERIZATION OF VARIANT ARG-181</scope>
    <scope>FUNCTION</scope>
</reference>
<reference key="32">
    <citation type="journal article" date="1993" name="Neurosci. Lett.">
        <title>Free D-serine, D-aspartate and D-alanine in central nervous system and serum in mutant mice lacking D-amino acid oxidase.</title>
        <authorList>
            <person name="Hashimoto A."/>
            <person name="Nishikawa T."/>
            <person name="Konno R."/>
            <person name="Niwa A."/>
            <person name="Yasumura Y."/>
            <person name="Oka T."/>
            <person name="Takahashi K."/>
        </authorList>
    </citation>
    <scope>CHARACTERIZATION OF VARIANT ARG-181</scope>
    <scope>FUNCTION</scope>
</reference>
<reference key="33">
    <citation type="journal article" date="1997" name="Amino Acids">
        <title>Origin of D-serine present in urine of mutant mice lacking D-amino-acid oxidase activity.</title>
        <authorList>
            <person name="Asakura S."/>
            <person name="Konno R."/>
        </authorList>
    </citation>
    <scope>CHARACTERIZATION OF VARIANT ARG-181</scope>
    <scope>FUNCTION</scope>
</reference>
<reference key="34">
    <citation type="journal article" date="2001" name="J. Chromatogr. B">
        <title>Determination of free D-aspartic acid, D-serine and D-alanine in the brain of mutant mice lacking D-amino acid oxidase activity.</title>
        <authorList>
            <person name="Morikawa A."/>
            <person name="Hamase K."/>
            <person name="Inoue T."/>
            <person name="Konno R."/>
            <person name="Niwa A."/>
            <person name="Zaitsu K."/>
        </authorList>
    </citation>
    <scope>CHARACTERIZATION OF VARIANT ARG-181</scope>
    <scope>FUNCTION</scope>
</reference>
<reference key="35">
    <citation type="journal article" date="2001" name="Neurosci. Lett.">
        <title>Exaggerated responses to chronic nociceptive stimuli and enhancement of N-methyl-D-aspartate receptor-mediated synaptic transmission in mutant mice lacking D-amino-acid oxidase.</title>
        <authorList>
            <person name="Wake K."/>
            <person name="Yamazaki H."/>
            <person name="Hanzawa S."/>
            <person name="Konno R."/>
            <person name="Sakio H."/>
            <person name="Niwa A."/>
            <person name="Hori Y."/>
        </authorList>
    </citation>
    <scope>CHARACTERIZATION OF VARIANT ARG-181</scope>
</reference>
<reference key="36">
    <citation type="journal article" date="2004" name="Am. J. Physiol.">
        <title>Role of renal D-amino-acid oxidase in pharmacokinetics of D-leucine.</title>
        <authorList>
            <person name="Hasegawa H."/>
            <person name="Matsukawa T."/>
            <person name="Shinohara Y."/>
            <person name="Konno R."/>
            <person name="Hashimoto T."/>
        </authorList>
    </citation>
    <scope>CHARACTERIZATION OF VARIANT ARG-181</scope>
    <scope>FUNCTION</scope>
</reference>
<reference key="37">
    <citation type="journal article" date="2005" name="Biol. Pharm. Bull.">
        <title>Sensitive determination of D-amino acids in mammals and the effect of D-amino-acid oxidase activity on their amounts.</title>
        <authorList>
            <person name="Hamase K."/>
            <person name="Konno R."/>
            <person name="Morikawa A."/>
            <person name="Zaitsu K."/>
        </authorList>
    </citation>
    <scope>CHARACTERIZATION OF VARIANT ARG-181</scope>
    <scope>FUNCTION</scope>
</reference>
<reference key="38">
    <citation type="journal article" date="2005" name="Neurosci. Res.">
        <title>Spatial learning and long-term potentiation of mutant mice lacking D-amino-acid oxidase.</title>
        <authorList>
            <person name="Maekawa M."/>
            <person name="Watanabe M."/>
            <person name="Yamaguchi S."/>
            <person name="Konno R."/>
            <person name="Hori Y."/>
        </authorList>
    </citation>
    <scope>CHARACTERIZATION OF VARIANT ARG-181</scope>
</reference>
<reference key="39">
    <citation type="journal article" date="2006" name="Clin. Exp. Pharmacol. Physiol.">
        <title>D-dopa is unidirectionally converted to L-dopa by D-amino acid oxidase, followed by dopa transaminase.</title>
        <authorList>
            <person name="Wu M."/>
            <person name="Zhou X.J."/>
            <person name="Konno R."/>
            <person name="Wang Y.X."/>
        </authorList>
    </citation>
    <scope>CHARACTERIZATION OF VARIANT ARG-181</scope>
    <scope>FUNCTION</scope>
</reference>
<reference key="40">
    <citation type="journal article" date="2006" name="Mol. Cell. Neurosci.">
        <title>Behavioral and biochemical characterization of a mutant mouse strain lacking D-amino acid oxidase activity and its implications for schizophrenia.</title>
        <authorList>
            <person name="Almond S.L."/>
            <person name="Fradley R.L."/>
            <person name="Armstrong E.J."/>
            <person name="Heavens R.B."/>
            <person name="Rutter A.R."/>
            <person name="Newman R.J."/>
            <person name="Chiu C.S."/>
            <person name="Konno R."/>
            <person name="Hutson P.H."/>
            <person name="Brandon N.J."/>
        </authorList>
    </citation>
    <scope>CHARACTERIZATION OF VARIANT ARG-181</scope>
    <scope>TISSUE SPECIFICITY</scope>
</reference>
<reference key="41">
    <citation type="journal article" date="2008" name="Cell. Mol. Neurobiol.">
        <title>Inhibition of D-amino-Acid oxidase activity induces pain relief in mice.</title>
        <authorList>
            <person name="Zhao W."/>
            <person name="Konno R."/>
            <person name="Zhou X.J."/>
            <person name="Yin M."/>
            <person name="Wang Y.X."/>
        </authorList>
    </citation>
    <scope>CHARACTERIZATION OF VARIANT ARG-181</scope>
</reference>
<reference key="42">
    <citation type="journal article" date="2009" name="Pharmacol. Biochem. Behav.">
        <title>Mutant mice with reduced NMDA-NR1 glycine affinity or lack of D-amino acid oxidase function exhibit altered anxiety-like behaviors.</title>
        <authorList>
            <person name="Labrie V."/>
            <person name="Clapcote S.J."/>
            <person name="Roder J.C."/>
        </authorList>
    </citation>
    <scope>CHARACTERIZATION OF VARIANT ARG-181</scope>
</reference>
<reference key="43">
    <citation type="journal article" date="2009" name="Learn. Memory">
        <title>Genetic inactivation of D-amino acid oxidase enhances extinction and reversal learning in mice.</title>
        <authorList>
            <person name="Labrie V."/>
            <person name="Duffy S."/>
            <person name="Wang W."/>
            <person name="Barger S.W."/>
            <person name="Baker G.B."/>
            <person name="Roder J.C."/>
        </authorList>
    </citation>
    <scope>CHARACTERIZATION OF VARIANT ARG-181</scope>
</reference>
<reference key="44">
    <citation type="journal article" date="2010" name="Chem. Biodivers.">
        <title>Indispensable but insufficient role of renal D-amino acid oxidase in chiral inversion of NG-nitro-D-arginine.</title>
        <authorList>
            <person name="Xin Y.F."/>
            <person name="Li X."/>
            <person name="Hao B."/>
            <person name="Gong N."/>
            <person name="Sun W.Q."/>
            <person name="Konno R."/>
            <person name="Wang Y.X."/>
        </authorList>
    </citation>
    <scope>CHARACTERIZATION OF VARIANT ARG-181</scope>
    <scope>FUNCTION</scope>
    <scope>TISSUE SPECIFICITY</scope>
</reference>
<reference key="45">
    <citation type="journal article" date="2010" name="Genes Brain Behav.">
        <title>Genetic loss of D-amino acid oxidase activity reverses schizophrenia-like phenotypes in mice.</title>
        <authorList>
            <person name="Labrie V."/>
            <person name="Wang W."/>
            <person name="Barger S.W."/>
            <person name="Baker G.B."/>
            <person name="Roder J.C."/>
        </authorList>
    </citation>
    <scope>CHARACTERIZATION OF VARIANT ARG-181</scope>
</reference>
<reference key="46">
    <citation type="journal article" date="2012" name="Infect. Immun.">
        <title>Protective role of D-amino acid oxidase against Staphylococcus aureus infection.</title>
        <authorList>
            <person name="Nakamura H."/>
            <person name="Fang J."/>
            <person name="Maeda H."/>
        </authorList>
    </citation>
    <scope>CHARACTERIZATION OF VARIANT ARG-181</scope>
    <scope>FUNCTION</scope>
</reference>
<reference key="47">
    <citation type="journal article" date="2012" name="Proc. Natl. Acad. Sci. U.S.A.">
        <title>D-amino acid oxidase controls motoneuron degeneration through D-serine.</title>
        <authorList>
            <person name="Sasabe J."/>
            <person name="Miyoshi Y."/>
            <person name="Suzuki M."/>
            <person name="Mita M."/>
            <person name="Konno R."/>
            <person name="Matsuoka M."/>
            <person name="Hamase K."/>
            <person name="Aiso S."/>
        </authorList>
    </citation>
    <scope>CHARACTERIZATION OF VARIANT ARG-181</scope>
    <scope>TISSUE SPECIFICITY</scope>
</reference>
<reference key="48">
    <citation type="journal article" date="2016" name="Nat. Microbiol.">
        <title>Interplay between microbial d-amino acids and host d-amino acid oxidase modifies murine mucosal defence and gut microbiota.</title>
        <authorList>
            <person name="Sasabe J."/>
            <person name="Miyoshi Y."/>
            <person name="Rakoff-Nahoum S."/>
            <person name="Zhang T."/>
            <person name="Mita M."/>
            <person name="Davis B.M."/>
            <person name="Hamase K."/>
            <person name="Waldor M.K."/>
        </authorList>
    </citation>
    <scope>CHARACTERIZATION OF VARIANT ARG-181</scope>
    <scope>FUNCTION</scope>
    <scope>SUBCELLULAR LOCATION</scope>
    <scope>TISSUE SPECIFICITY</scope>
    <scope>INDUCTION</scope>
</reference>
<keyword id="KW-0966">Cell projection</keyword>
<keyword id="KW-0963">Cytoplasm</keyword>
<keyword id="KW-0274">FAD</keyword>
<keyword id="KW-0285">Flavoprotein</keyword>
<keyword id="KW-0560">Oxidoreductase</keyword>
<keyword id="KW-0576">Peroxisome</keyword>
<keyword id="KW-0597">Phosphoprotein</keyword>
<keyword id="KW-1185">Reference proteome</keyword>
<keyword id="KW-0702">S-nitrosylation</keyword>
<keyword id="KW-0964">Secreted</keyword>
<keyword id="KW-0770">Synapse</keyword>
<organism>
    <name type="scientific">Mus musculus</name>
    <name type="common">Mouse</name>
    <dbReference type="NCBI Taxonomy" id="10090"/>
    <lineage>
        <taxon>Eukaryota</taxon>
        <taxon>Metazoa</taxon>
        <taxon>Chordata</taxon>
        <taxon>Craniata</taxon>
        <taxon>Vertebrata</taxon>
        <taxon>Euteleostomi</taxon>
        <taxon>Mammalia</taxon>
        <taxon>Eutheria</taxon>
        <taxon>Euarchontoglires</taxon>
        <taxon>Glires</taxon>
        <taxon>Rodentia</taxon>
        <taxon>Myomorpha</taxon>
        <taxon>Muroidea</taxon>
        <taxon>Muridae</taxon>
        <taxon>Murinae</taxon>
        <taxon>Mus</taxon>
        <taxon>Mus</taxon>
    </lineage>
</organism>
<evidence type="ECO:0000250" key="1">
    <source>
        <dbReference type="UniProtKB" id="O35078"/>
    </source>
</evidence>
<evidence type="ECO:0000250" key="2">
    <source>
        <dbReference type="UniProtKB" id="P00371"/>
    </source>
</evidence>
<evidence type="ECO:0000250" key="3">
    <source>
        <dbReference type="UniProtKB" id="P14920"/>
    </source>
</evidence>
<evidence type="ECO:0000269" key="4">
    <source>
    </source>
</evidence>
<evidence type="ECO:0000269" key="5">
    <source>
    </source>
</evidence>
<evidence type="ECO:0000269" key="6">
    <source>
    </source>
</evidence>
<evidence type="ECO:0000269" key="7">
    <source>
    </source>
</evidence>
<evidence type="ECO:0000269" key="8">
    <source>
    </source>
</evidence>
<evidence type="ECO:0000269" key="9">
    <source>
    </source>
</evidence>
<evidence type="ECO:0000269" key="10">
    <source>
    </source>
</evidence>
<evidence type="ECO:0000269" key="11">
    <source>
    </source>
</evidence>
<evidence type="ECO:0000269" key="12">
    <source>
    </source>
</evidence>
<evidence type="ECO:0000269" key="13">
    <source>
    </source>
</evidence>
<evidence type="ECO:0000269" key="14">
    <source>
    </source>
</evidence>
<evidence type="ECO:0000269" key="15">
    <source>
    </source>
</evidence>
<evidence type="ECO:0000269" key="16">
    <source>
    </source>
</evidence>
<evidence type="ECO:0000269" key="17">
    <source>
    </source>
</evidence>
<evidence type="ECO:0000269" key="18">
    <source>
    </source>
</evidence>
<evidence type="ECO:0000269" key="19">
    <source>
    </source>
</evidence>
<evidence type="ECO:0000269" key="20">
    <source>
    </source>
</evidence>
<evidence type="ECO:0000269" key="21">
    <source>
    </source>
</evidence>
<evidence type="ECO:0000269" key="22">
    <source>
    </source>
</evidence>
<evidence type="ECO:0000269" key="23">
    <source>
    </source>
</evidence>
<evidence type="ECO:0000269" key="24">
    <source>
    </source>
</evidence>
<evidence type="ECO:0000269" key="25">
    <source>
    </source>
</evidence>
<evidence type="ECO:0000269" key="26">
    <source>
    </source>
</evidence>
<evidence type="ECO:0000269" key="27">
    <source>
    </source>
</evidence>
<evidence type="ECO:0000269" key="28">
    <source>
    </source>
</evidence>
<evidence type="ECO:0000269" key="29">
    <source>
    </source>
</evidence>
<evidence type="ECO:0000269" key="30">
    <source>
    </source>
</evidence>
<evidence type="ECO:0000269" key="31">
    <source>
    </source>
</evidence>
<evidence type="ECO:0000269" key="32">
    <source>
    </source>
</evidence>
<evidence type="ECO:0000269" key="33">
    <source>
    </source>
</evidence>
<evidence type="ECO:0000269" key="34">
    <source>
    </source>
</evidence>
<evidence type="ECO:0000269" key="35">
    <source>
    </source>
</evidence>
<evidence type="ECO:0000269" key="36">
    <source>
    </source>
</evidence>
<evidence type="ECO:0000269" key="37">
    <source>
    </source>
</evidence>
<evidence type="ECO:0000269" key="38">
    <source>
    </source>
</evidence>
<evidence type="ECO:0000269" key="39">
    <source>
    </source>
</evidence>
<evidence type="ECO:0000269" key="40">
    <source>
    </source>
</evidence>
<evidence type="ECO:0000269" key="41">
    <source>
    </source>
</evidence>
<evidence type="ECO:0000269" key="42">
    <source>
    </source>
</evidence>
<evidence type="ECO:0000269" key="43">
    <source>
    </source>
</evidence>
<evidence type="ECO:0000269" key="44">
    <source ref="33"/>
</evidence>
<evidence type="ECO:0000269" key="45">
    <source ref="36"/>
</evidence>
<evidence type="ECO:0000305" key="46"/>
<evidence type="ECO:0000312" key="47">
    <source>
        <dbReference type="EMBL" id="AAA39367.1"/>
    </source>
</evidence>
<evidence type="ECO:0000312" key="48">
    <source>
        <dbReference type="EMBL" id="BAA01062.1"/>
    </source>
</evidence>
<evidence type="ECO:0000312" key="49">
    <source>
        <dbReference type="EMBL" id="BAA01063.1"/>
    </source>
</evidence>
<evidence type="ECO:0000312" key="50">
    <source>
        <dbReference type="EMBL" id="BAE22296.1"/>
    </source>
</evidence>
<evidence type="ECO:0000312" key="51">
    <source>
        <dbReference type="Proteomes" id="UP000000589"/>
    </source>
</evidence>
<protein>
    <recommendedName>
        <fullName>D-amino-acid oxidase</fullName>
        <shortName>DAAO</shortName>
        <shortName>DAMOX</shortName>
        <shortName>DAO</shortName>
        <ecNumber evidence="7 18 19 35">1.4.3.3</ecNumber>
    </recommendedName>
</protein>
<feature type="chain" id="PRO_0000162762" description="D-amino-acid oxidase">
    <location>
        <begin position="1"/>
        <end position="345"/>
    </location>
</feature>
<feature type="region of interest" description="Required for protein stability" evidence="3">
    <location>
        <begin position="1"/>
        <end position="16"/>
    </location>
</feature>
<feature type="region of interest" description="Active site lid that may open upon substrate/product migration in and out of the active site and close to increase the hydrophobicity of the active site, to make the hydride transfer reaction more efficient" evidence="2">
    <location>
        <begin position="214"/>
        <end position="226"/>
    </location>
</feature>
<feature type="short sequence motif" description="Microbody targeting signal">
    <location>
        <begin position="343"/>
        <end position="345"/>
    </location>
</feature>
<feature type="binding site" evidence="3">
    <location>
        <position position="8"/>
    </location>
    <ligand>
        <name>FAD</name>
        <dbReference type="ChEBI" id="CHEBI:57692"/>
    </ligand>
</feature>
<feature type="binding site" evidence="3">
    <location>
        <position position="9"/>
    </location>
    <ligand>
        <name>FAD</name>
        <dbReference type="ChEBI" id="CHEBI:57692"/>
    </ligand>
</feature>
<feature type="binding site" evidence="3">
    <location>
        <position position="10"/>
    </location>
    <ligand>
        <name>FAD</name>
        <dbReference type="ChEBI" id="CHEBI:57692"/>
    </ligand>
</feature>
<feature type="binding site" evidence="3">
    <location>
        <position position="11"/>
    </location>
    <ligand>
        <name>FAD</name>
        <dbReference type="ChEBI" id="CHEBI:57692"/>
    </ligand>
</feature>
<feature type="binding site" evidence="3">
    <location>
        <position position="36"/>
    </location>
    <ligand>
        <name>FAD</name>
        <dbReference type="ChEBI" id="CHEBI:57692"/>
    </ligand>
</feature>
<feature type="binding site" evidence="3">
    <location>
        <position position="37"/>
    </location>
    <ligand>
        <name>FAD</name>
        <dbReference type="ChEBI" id="CHEBI:57692"/>
    </ligand>
</feature>
<feature type="binding site" evidence="3">
    <location>
        <position position="42"/>
    </location>
    <ligand>
        <name>FAD</name>
        <dbReference type="ChEBI" id="CHEBI:57692"/>
    </ligand>
</feature>
<feature type="binding site" evidence="3">
    <location>
        <position position="43"/>
    </location>
    <ligand>
        <name>FAD</name>
        <dbReference type="ChEBI" id="CHEBI:57692"/>
    </ligand>
</feature>
<feature type="binding site" evidence="3">
    <location>
        <position position="44"/>
    </location>
    <ligand>
        <name>FAD</name>
        <dbReference type="ChEBI" id="CHEBI:57692"/>
    </ligand>
</feature>
<feature type="binding site" evidence="2">
    <location>
        <position position="48"/>
    </location>
    <ligand>
        <name>FAD</name>
        <dbReference type="ChEBI" id="CHEBI:57692"/>
    </ligand>
</feature>
<feature type="binding site" evidence="3">
    <location>
        <position position="49"/>
    </location>
    <ligand>
        <name>FAD</name>
        <dbReference type="ChEBI" id="CHEBI:57692"/>
    </ligand>
</feature>
<feature type="binding site" evidence="3">
    <location>
        <position position="50"/>
    </location>
    <ligand>
        <name>FAD</name>
        <dbReference type="ChEBI" id="CHEBI:57692"/>
    </ligand>
</feature>
<feature type="binding site" evidence="3">
    <location>
        <position position="52"/>
    </location>
    <ligand>
        <name>D-dopa</name>
        <dbReference type="ChEBI" id="CHEBI:149689"/>
    </ligand>
</feature>
<feature type="binding site" evidence="2">
    <location>
        <position position="162"/>
    </location>
    <ligand>
        <name>FAD</name>
        <dbReference type="ChEBI" id="CHEBI:57692"/>
    </ligand>
</feature>
<feature type="binding site" evidence="3">
    <location>
        <position position="163"/>
    </location>
    <ligand>
        <name>FAD</name>
        <dbReference type="ChEBI" id="CHEBI:57692"/>
    </ligand>
</feature>
<feature type="binding site" evidence="3">
    <location>
        <position position="180"/>
    </location>
    <ligand>
        <name>FAD</name>
        <dbReference type="ChEBI" id="CHEBI:57692"/>
    </ligand>
</feature>
<feature type="binding site" evidence="3">
    <location>
        <position position="222"/>
    </location>
    <ligand>
        <name>D-serine</name>
        <dbReference type="ChEBI" id="CHEBI:35247"/>
    </ligand>
</feature>
<feature type="binding site" evidence="2">
    <location>
        <position position="226"/>
    </location>
    <ligand>
        <name>D-proline</name>
        <dbReference type="ChEBI" id="CHEBI:57726"/>
    </ligand>
</feature>
<feature type="binding site" evidence="3">
    <location>
        <position position="226"/>
    </location>
    <ligand>
        <name>D-serine</name>
        <dbReference type="ChEBI" id="CHEBI:35247"/>
    </ligand>
</feature>
<feature type="binding site" evidence="3">
    <location>
        <position position="281"/>
    </location>
    <ligand>
        <name>D-dopa</name>
        <dbReference type="ChEBI" id="CHEBI:149689"/>
    </ligand>
</feature>
<feature type="binding site" evidence="2">
    <location>
        <position position="281"/>
    </location>
    <ligand>
        <name>D-proline</name>
        <dbReference type="ChEBI" id="CHEBI:57726"/>
    </ligand>
</feature>
<feature type="binding site" evidence="3">
    <location>
        <position position="281"/>
    </location>
    <ligand>
        <name>D-serine</name>
        <dbReference type="ChEBI" id="CHEBI:35247"/>
    </ligand>
</feature>
<feature type="binding site" evidence="3">
    <location>
        <position position="281"/>
    </location>
    <ligand>
        <name>FAD</name>
        <dbReference type="ChEBI" id="CHEBI:57692"/>
    </ligand>
</feature>
<feature type="binding site" evidence="3">
    <location>
        <position position="310"/>
    </location>
    <ligand>
        <name>FAD</name>
        <dbReference type="ChEBI" id="CHEBI:57692"/>
    </ligand>
</feature>
<feature type="binding site" evidence="3">
    <location>
        <position position="311"/>
    </location>
    <ligand>
        <name>D-dopa</name>
        <dbReference type="ChEBI" id="CHEBI:149689"/>
    </ligand>
</feature>
<feature type="binding site" evidence="2">
    <location>
        <position position="311"/>
    </location>
    <ligand>
        <name>D-proline</name>
        <dbReference type="ChEBI" id="CHEBI:57726"/>
    </ligand>
</feature>
<feature type="binding site" evidence="3">
    <location>
        <position position="311"/>
    </location>
    <ligand>
        <name>D-serine</name>
        <dbReference type="ChEBI" id="CHEBI:35247"/>
    </ligand>
</feature>
<feature type="binding site" evidence="3">
    <location>
        <position position="311"/>
    </location>
    <ligand>
        <name>FAD</name>
        <dbReference type="ChEBI" id="CHEBI:57692"/>
    </ligand>
</feature>
<feature type="binding site" evidence="3">
    <location>
        <position position="313"/>
    </location>
    <ligand>
        <name>FAD</name>
        <dbReference type="ChEBI" id="CHEBI:57692"/>
    </ligand>
</feature>
<feature type="binding site" evidence="3">
    <location>
        <position position="314"/>
    </location>
    <ligand>
        <name>FAD</name>
        <dbReference type="ChEBI" id="CHEBI:57692"/>
    </ligand>
</feature>
<feature type="binding site" evidence="3">
    <location>
        <position position="315"/>
    </location>
    <ligand>
        <name>FAD</name>
        <dbReference type="ChEBI" id="CHEBI:57692"/>
    </ligand>
</feature>
<feature type="sequence variant" description="Abolishes activity; mutant mice exhibit heightened anxiety, the effect is particularly pronounced in female mice; performance in the Morris water maze is improved; responses to nociceptive stimuli are altered; hypoactive; leads to motorneuron degeneration; aged animals exhibit muscle atrophy; leads to increased susceptibility to S.aureus challenge in a renal infection model; resistance to the effects of the psychoactive drug phencyclidine (PCP); resistance to the effects of the NMDA glycine-site antagonist L-701,324; excitatory postsynaptic currents are altered; long-term potentiation in the CA1 area of hippocampus is increased; leads to the accumulation of D-amino acids in the cerebrum, cerebellum, whole cortex, medulla oblongata, hippocampus, hypothalamus, lumbar spinal cord, pituitary gland, kidney, blood, serum, urine and also mucosa and epithelium of the small intestine, including D-serine, D-alanine, D-proline, D-methionine and D-leucine but not D-aspartate; alters the level of L-glutamine and L-glutamate in the cerebellum and serum; increases colonization by V.cholerae and Lactobacillales of the small intestine; decreases colonization by Bacteroidales of the small intestine; increases the level of secretory immunoglobulin A in the feces and small intestine; normal life span; normal gross morphology; normal fertility; normal blood glucose level; fecal levels of D-amino acids are unchanged; normal D-serine uptake in cerebellar synaptosomes; the expression of the NMDA receptor component Grin1, amino acid transporter Slc7a10, glycine transporter Slc6a9, or serine racemase Srr is unaltered." evidence="4 5 6 7 8 9 10 11 12 13 14 15 16 17 20 21 22 26 28 29 39 40 42 44 45">
    <original>G</original>
    <variation>R</variation>
    <location>
        <position position="181"/>
    </location>
</feature>
<feature type="sequence conflict" description="In Ref. 1; AAA39367 and 2; BAA01063." evidence="46" ref="1 2">
    <original>A</original>
    <variation>V</variation>
    <location>
        <position position="64"/>
    </location>
</feature>
<feature type="sequence conflict" description="In Ref. 2; BAA01062." evidence="46" ref="2">
    <original>K</original>
    <variation>N</variation>
    <location>
        <position position="157"/>
    </location>
</feature>
<feature type="sequence conflict" description="In Ref. 2; BAA01062." evidence="46" ref="2">
    <original>R</original>
    <variation>RG</variation>
    <location>
        <position position="171"/>
    </location>
</feature>
<feature type="sequence conflict" description="In Ref. 1; AAA39367 and 2; BAA01062/BAA01063." evidence="46" ref="1 2">
    <original>H</original>
    <variation>R</variation>
    <location>
        <position position="295"/>
    </location>
</feature>
<gene>
    <name type="primary">Dao</name>
    <name type="synonym">Dao1</name>
</gene>
<sequence length="345" mass="38652">MRVAVIGAGVIGLSTALCIHERYHPTQPLHMKIYADRFTPFTTSDVAAGLWQPYLSDPSNPQEAEWSQQTFDYLLSCLHSPNAEKMGLALISGYNLFRDEVPDPFWKNAVLGFRKLTPSEMDLFPDYGYGWFNTSLLLEGKSYLPWLTERLTERGVKLIHRKVESLEEVARGVDVIINCTGVWAGALQADASLQPGRGQIIQVEAPWIKHFILTHDPSLGIYNSPYIIPGSKTVTLGGIFQLGNWSGLNSVRDHNTIWKSCCKLEPTLKNARIVGELTGFRPVRPQVRLEREWLHFGSSSAEVIHNYGHGGYGLTIHWGCAMEAANLFGKILEEKKLSRLPPSHL</sequence>
<proteinExistence type="evidence at protein level"/>
<dbReference type="EC" id="1.4.3.3" evidence="7 18 19 35"/>
<dbReference type="EMBL" id="M32299">
    <property type="protein sequence ID" value="AAA39367.1"/>
    <property type="molecule type" value="mRNA"/>
</dbReference>
<dbReference type="EMBL" id="D10210">
    <property type="protein sequence ID" value="BAA01062.1"/>
    <property type="molecule type" value="mRNA"/>
</dbReference>
<dbReference type="EMBL" id="D10211">
    <property type="protein sequence ID" value="BAA01063.1"/>
    <property type="molecule type" value="mRNA"/>
</dbReference>
<dbReference type="EMBL" id="AK134813">
    <property type="protein sequence ID" value="BAE22296.1"/>
    <property type="molecule type" value="mRNA"/>
</dbReference>
<dbReference type="EMBL" id="BC018377">
    <property type="protein sequence ID" value="AAH18377.1"/>
    <property type="molecule type" value="mRNA"/>
</dbReference>
<dbReference type="CCDS" id="CCDS19557.1"/>
<dbReference type="PIR" id="JH0185">
    <property type="entry name" value="JH0185"/>
</dbReference>
<dbReference type="RefSeq" id="NP_001273325.1">
    <property type="nucleotide sequence ID" value="NM_001286396.1"/>
</dbReference>
<dbReference type="RefSeq" id="NP_034148.2">
    <property type="nucleotide sequence ID" value="NM_010018.3"/>
</dbReference>
<dbReference type="RefSeq" id="XP_006530224.1">
    <property type="nucleotide sequence ID" value="XM_006530161.2"/>
</dbReference>
<dbReference type="RefSeq" id="XP_006530225.1">
    <property type="nucleotide sequence ID" value="XM_006530162.4"/>
</dbReference>
<dbReference type="SMR" id="P18894"/>
<dbReference type="FunCoup" id="P18894">
    <property type="interactions" value="385"/>
</dbReference>
<dbReference type="STRING" id="10090.ENSMUSP00000107911"/>
<dbReference type="BindingDB" id="P18894"/>
<dbReference type="ChEMBL" id="CHEMBL2331068"/>
<dbReference type="iPTMnet" id="P18894"/>
<dbReference type="PhosphoSitePlus" id="P18894"/>
<dbReference type="SwissPalm" id="P18894"/>
<dbReference type="jPOST" id="P18894"/>
<dbReference type="PaxDb" id="10090-ENSMUSP00000107911"/>
<dbReference type="PeptideAtlas" id="P18894"/>
<dbReference type="ProteomicsDB" id="294229"/>
<dbReference type="ProteomicsDB" id="335233"/>
<dbReference type="Antibodypedia" id="30788">
    <property type="antibodies" value="296 antibodies from 30 providers"/>
</dbReference>
<dbReference type="DNASU" id="13142"/>
<dbReference type="Ensembl" id="ENSMUST00000112292.9">
    <property type="protein sequence ID" value="ENSMUSP00000107911.3"/>
    <property type="gene ID" value="ENSMUSG00000042096.16"/>
</dbReference>
<dbReference type="Ensembl" id="ENSMUST00000161610.6">
    <property type="protein sequence ID" value="ENSMUSP00000125588.2"/>
    <property type="gene ID" value="ENSMUSG00000042096.16"/>
</dbReference>
<dbReference type="GeneID" id="13142"/>
<dbReference type="KEGG" id="mmu:13142"/>
<dbReference type="UCSC" id="uc008yza.2">
    <property type="organism name" value="mouse"/>
</dbReference>
<dbReference type="AGR" id="MGI:94859"/>
<dbReference type="CTD" id="1610"/>
<dbReference type="MGI" id="MGI:94859">
    <property type="gene designation" value="Dao"/>
</dbReference>
<dbReference type="VEuPathDB" id="HostDB:ENSMUSG00000042096"/>
<dbReference type="eggNOG" id="KOG3923">
    <property type="taxonomic scope" value="Eukaryota"/>
</dbReference>
<dbReference type="GeneTree" id="ENSGT00390000018635"/>
<dbReference type="InParanoid" id="P18894"/>
<dbReference type="OMA" id="LWWPYRI"/>
<dbReference type="OrthoDB" id="2015447at2759"/>
<dbReference type="PhylomeDB" id="P18894"/>
<dbReference type="TreeFam" id="TF313887"/>
<dbReference type="BRENDA" id="1.4.3.3">
    <property type="organism ID" value="3474"/>
</dbReference>
<dbReference type="Reactome" id="R-MMU-389661">
    <property type="pathway name" value="Glyoxylate metabolism and glycine degradation"/>
</dbReference>
<dbReference type="Reactome" id="R-MMU-9033241">
    <property type="pathway name" value="Peroxisomal protein import"/>
</dbReference>
<dbReference type="BioGRID-ORCS" id="13142">
    <property type="hits" value="1 hit in 76 CRISPR screens"/>
</dbReference>
<dbReference type="ChiTaRS" id="Aoc1">
    <property type="organism name" value="mouse"/>
</dbReference>
<dbReference type="PRO" id="PR:P18894"/>
<dbReference type="Proteomes" id="UP000000589">
    <property type="component" value="Chromosome 5"/>
</dbReference>
<dbReference type="RNAct" id="P18894">
    <property type="molecule type" value="protein"/>
</dbReference>
<dbReference type="Bgee" id="ENSMUSG00000042096">
    <property type="expression patterns" value="Expressed in adult mammalian kidney and 53 other cell types or tissues"/>
</dbReference>
<dbReference type="GO" id="GO:0042995">
    <property type="term" value="C:cell projection"/>
    <property type="evidence" value="ECO:0007669"/>
    <property type="project" value="UniProtKB-KW"/>
</dbReference>
<dbReference type="GO" id="GO:0005829">
    <property type="term" value="C:cytosol"/>
    <property type="evidence" value="ECO:0007669"/>
    <property type="project" value="UniProtKB-SubCell"/>
</dbReference>
<dbReference type="GO" id="GO:0005615">
    <property type="term" value="C:extracellular space"/>
    <property type="evidence" value="ECO:0000314"/>
    <property type="project" value="UniProtKB"/>
</dbReference>
<dbReference type="GO" id="GO:0005741">
    <property type="term" value="C:mitochondrial outer membrane"/>
    <property type="evidence" value="ECO:0007669"/>
    <property type="project" value="Ensembl"/>
</dbReference>
<dbReference type="GO" id="GO:0005782">
    <property type="term" value="C:peroxisomal matrix"/>
    <property type="evidence" value="ECO:0000314"/>
    <property type="project" value="UniProtKB"/>
</dbReference>
<dbReference type="GO" id="GO:0005777">
    <property type="term" value="C:peroxisome"/>
    <property type="evidence" value="ECO:0000250"/>
    <property type="project" value="UniProtKB"/>
</dbReference>
<dbReference type="GO" id="GO:0048786">
    <property type="term" value="C:presynaptic active zone"/>
    <property type="evidence" value="ECO:0000250"/>
    <property type="project" value="UniProtKB"/>
</dbReference>
<dbReference type="GO" id="GO:0008718">
    <property type="term" value="F:D-amino-acid dehydrogenase activity"/>
    <property type="evidence" value="ECO:0000315"/>
    <property type="project" value="UniProtKB"/>
</dbReference>
<dbReference type="GO" id="GO:0003884">
    <property type="term" value="F:D-amino-acid oxidase activity"/>
    <property type="evidence" value="ECO:0000314"/>
    <property type="project" value="UniProtKB"/>
</dbReference>
<dbReference type="GO" id="GO:0071949">
    <property type="term" value="F:FAD binding"/>
    <property type="evidence" value="ECO:0000314"/>
    <property type="project" value="UniProtKB"/>
</dbReference>
<dbReference type="GO" id="GO:0043799">
    <property type="term" value="F:glycine oxidase activity"/>
    <property type="evidence" value="ECO:0007669"/>
    <property type="project" value="RHEA"/>
</dbReference>
<dbReference type="GO" id="GO:0042802">
    <property type="term" value="F:identical protein binding"/>
    <property type="evidence" value="ECO:0007669"/>
    <property type="project" value="Ensembl"/>
</dbReference>
<dbReference type="GO" id="GO:0055130">
    <property type="term" value="P:D-alanine catabolic process"/>
    <property type="evidence" value="ECO:0000314"/>
    <property type="project" value="UniProtKB"/>
</dbReference>
<dbReference type="GO" id="GO:0036088">
    <property type="term" value="P:D-serine catabolic process"/>
    <property type="evidence" value="ECO:0007669"/>
    <property type="project" value="Ensembl"/>
</dbReference>
<dbReference type="GO" id="GO:0007586">
    <property type="term" value="P:digestion"/>
    <property type="evidence" value="ECO:0000315"/>
    <property type="project" value="UniProtKB"/>
</dbReference>
<dbReference type="GO" id="GO:0042416">
    <property type="term" value="P:dopamine biosynthetic process"/>
    <property type="evidence" value="ECO:0000315"/>
    <property type="project" value="UniProtKB"/>
</dbReference>
<dbReference type="GO" id="GO:0051873">
    <property type="term" value="P:killing by host of symbiont cells"/>
    <property type="evidence" value="ECO:0000314"/>
    <property type="project" value="UniProtKB"/>
</dbReference>
<dbReference type="GO" id="GO:0006551">
    <property type="term" value="P:L-leucine metabolic process"/>
    <property type="evidence" value="ECO:0000315"/>
    <property type="project" value="MGI"/>
</dbReference>
<dbReference type="GO" id="GO:0070945">
    <property type="term" value="P:neutrophil-mediated killing of gram-negative bacterium"/>
    <property type="evidence" value="ECO:0000314"/>
    <property type="project" value="UniProtKB"/>
</dbReference>
<dbReference type="GO" id="GO:0006562">
    <property type="term" value="P:proline catabolic process"/>
    <property type="evidence" value="ECO:0007669"/>
    <property type="project" value="Ensembl"/>
</dbReference>
<dbReference type="FunFam" id="3.40.50.720:FF:000641">
    <property type="entry name" value="D-amino acid oxidase"/>
    <property type="match status" value="1"/>
</dbReference>
<dbReference type="FunFam" id="3.30.9.10:FF:000004">
    <property type="entry name" value="D-amino-acid oxidase"/>
    <property type="match status" value="1"/>
</dbReference>
<dbReference type="Gene3D" id="3.30.9.10">
    <property type="entry name" value="D-Amino Acid Oxidase, subunit A, domain 2"/>
    <property type="match status" value="1"/>
</dbReference>
<dbReference type="Gene3D" id="3.40.50.720">
    <property type="entry name" value="NAD(P)-binding Rossmann-like Domain"/>
    <property type="match status" value="1"/>
</dbReference>
<dbReference type="InterPro" id="IPR006181">
    <property type="entry name" value="D-amino_acid_oxidase_CS"/>
</dbReference>
<dbReference type="InterPro" id="IPR023209">
    <property type="entry name" value="DAO"/>
</dbReference>
<dbReference type="InterPro" id="IPR006076">
    <property type="entry name" value="FAD-dep_OxRdtase"/>
</dbReference>
<dbReference type="PANTHER" id="PTHR11530">
    <property type="entry name" value="D-AMINO ACID OXIDASE"/>
    <property type="match status" value="1"/>
</dbReference>
<dbReference type="PANTHER" id="PTHR11530:SF15">
    <property type="entry name" value="D-AMINO-ACID OXIDASE"/>
    <property type="match status" value="1"/>
</dbReference>
<dbReference type="Pfam" id="PF01266">
    <property type="entry name" value="DAO"/>
    <property type="match status" value="1"/>
</dbReference>
<dbReference type="PIRSF" id="PIRSF000189">
    <property type="entry name" value="D-aa_oxidase"/>
    <property type="match status" value="1"/>
</dbReference>
<dbReference type="SUPFAM" id="SSF54373">
    <property type="entry name" value="FAD-linked reductases, C-terminal domain"/>
    <property type="match status" value="1"/>
</dbReference>
<dbReference type="SUPFAM" id="SSF51971">
    <property type="entry name" value="Nucleotide-binding domain"/>
    <property type="match status" value="1"/>
</dbReference>
<dbReference type="PROSITE" id="PS00677">
    <property type="entry name" value="DAO"/>
    <property type="match status" value="1"/>
</dbReference>
<accession>P18894</accession>
<accession>A0A0R4J203</accession>
<accession>Q64465</accession>
<accession>Q8VCW7</accession>